<name>NUOK_BEUC1</name>
<dbReference type="EC" id="7.1.1.-" evidence="1"/>
<dbReference type="EMBL" id="CP001618">
    <property type="protein sequence ID" value="ACQ81463.1"/>
    <property type="molecule type" value="Genomic_DNA"/>
</dbReference>
<dbReference type="RefSeq" id="WP_015883701.1">
    <property type="nucleotide sequence ID" value="NC_012669.1"/>
</dbReference>
<dbReference type="SMR" id="C5C0R7"/>
<dbReference type="STRING" id="471853.Bcav_3219"/>
<dbReference type="KEGG" id="bcv:Bcav_3219"/>
<dbReference type="eggNOG" id="COG0713">
    <property type="taxonomic scope" value="Bacteria"/>
</dbReference>
<dbReference type="HOGENOM" id="CLU_144724_0_0_11"/>
<dbReference type="OrthoDB" id="9810120at2"/>
<dbReference type="Proteomes" id="UP000007962">
    <property type="component" value="Chromosome"/>
</dbReference>
<dbReference type="GO" id="GO:0030964">
    <property type="term" value="C:NADH dehydrogenase complex"/>
    <property type="evidence" value="ECO:0007669"/>
    <property type="project" value="TreeGrafter"/>
</dbReference>
<dbReference type="GO" id="GO:0005886">
    <property type="term" value="C:plasma membrane"/>
    <property type="evidence" value="ECO:0007669"/>
    <property type="project" value="UniProtKB-SubCell"/>
</dbReference>
<dbReference type="GO" id="GO:0050136">
    <property type="term" value="F:NADH:ubiquinone reductase (non-electrogenic) activity"/>
    <property type="evidence" value="ECO:0007669"/>
    <property type="project" value="UniProtKB-UniRule"/>
</dbReference>
<dbReference type="GO" id="GO:0048038">
    <property type="term" value="F:quinone binding"/>
    <property type="evidence" value="ECO:0007669"/>
    <property type="project" value="UniProtKB-KW"/>
</dbReference>
<dbReference type="GO" id="GO:0042773">
    <property type="term" value="P:ATP synthesis coupled electron transport"/>
    <property type="evidence" value="ECO:0007669"/>
    <property type="project" value="InterPro"/>
</dbReference>
<dbReference type="FunFam" id="1.10.287.3510:FF:000001">
    <property type="entry name" value="NADH-quinone oxidoreductase subunit K"/>
    <property type="match status" value="1"/>
</dbReference>
<dbReference type="Gene3D" id="1.10.287.3510">
    <property type="match status" value="1"/>
</dbReference>
<dbReference type="HAMAP" id="MF_01456">
    <property type="entry name" value="NDH1_NuoK"/>
    <property type="match status" value="1"/>
</dbReference>
<dbReference type="InterPro" id="IPR001133">
    <property type="entry name" value="NADH_UbQ_OxRdtase_chain4L/K"/>
</dbReference>
<dbReference type="InterPro" id="IPR039428">
    <property type="entry name" value="NUOK/Mnh_C1-like"/>
</dbReference>
<dbReference type="NCBIfam" id="NF004320">
    <property type="entry name" value="PRK05715.1-2"/>
    <property type="match status" value="1"/>
</dbReference>
<dbReference type="PANTHER" id="PTHR11434:SF21">
    <property type="entry name" value="NADH DEHYDROGENASE SUBUNIT 4L-RELATED"/>
    <property type="match status" value="1"/>
</dbReference>
<dbReference type="PANTHER" id="PTHR11434">
    <property type="entry name" value="NADH-UBIQUINONE OXIDOREDUCTASE SUBUNIT ND4L"/>
    <property type="match status" value="1"/>
</dbReference>
<dbReference type="Pfam" id="PF00420">
    <property type="entry name" value="Oxidored_q2"/>
    <property type="match status" value="1"/>
</dbReference>
<protein>
    <recommendedName>
        <fullName evidence="1">NADH-quinone oxidoreductase subunit K</fullName>
        <ecNumber evidence="1">7.1.1.-</ecNumber>
    </recommendedName>
    <alternativeName>
        <fullName evidence="1">NADH dehydrogenase I subunit K</fullName>
    </alternativeName>
    <alternativeName>
        <fullName evidence="1">NDH-1 subunit K</fullName>
    </alternativeName>
</protein>
<keyword id="KW-1003">Cell membrane</keyword>
<keyword id="KW-0472">Membrane</keyword>
<keyword id="KW-0520">NAD</keyword>
<keyword id="KW-0874">Quinone</keyword>
<keyword id="KW-1185">Reference proteome</keyword>
<keyword id="KW-1278">Translocase</keyword>
<keyword id="KW-0812">Transmembrane</keyword>
<keyword id="KW-1133">Transmembrane helix</keyword>
<keyword id="KW-0813">Transport</keyword>
<comment type="function">
    <text evidence="1">NDH-1 shuttles electrons from NADH, via FMN and iron-sulfur (Fe-S) centers, to quinones in the respiratory chain. The immediate electron acceptor for the enzyme in this species is believed to be a menaquinone. Couples the redox reaction to proton translocation (for every two electrons transferred, four hydrogen ions are translocated across the cytoplasmic membrane), and thus conserves the redox energy in a proton gradient.</text>
</comment>
<comment type="catalytic activity">
    <reaction evidence="1">
        <text>a quinone + NADH + 5 H(+)(in) = a quinol + NAD(+) + 4 H(+)(out)</text>
        <dbReference type="Rhea" id="RHEA:57888"/>
        <dbReference type="ChEBI" id="CHEBI:15378"/>
        <dbReference type="ChEBI" id="CHEBI:24646"/>
        <dbReference type="ChEBI" id="CHEBI:57540"/>
        <dbReference type="ChEBI" id="CHEBI:57945"/>
        <dbReference type="ChEBI" id="CHEBI:132124"/>
    </reaction>
</comment>
<comment type="subunit">
    <text evidence="1">NDH-1 is composed of 14 different subunits. Subunits NuoA, H, J, K, L, M, N constitute the membrane sector of the complex.</text>
</comment>
<comment type="subcellular location">
    <subcellularLocation>
        <location evidence="1">Cell membrane</location>
        <topology evidence="1">Multi-pass membrane protein</topology>
    </subcellularLocation>
</comment>
<comment type="similarity">
    <text evidence="1">Belongs to the complex I subunit 4L family.</text>
</comment>
<reference key="1">
    <citation type="journal article" date="2009" name="Stand. Genomic Sci.">
        <title>Complete genome sequence of Beutenbergia cavernae type strain (HKI 0122).</title>
        <authorList>
            <person name="Land M."/>
            <person name="Pukall R."/>
            <person name="Abt B."/>
            <person name="Goker M."/>
            <person name="Rohde M."/>
            <person name="Glavina Del Rio T."/>
            <person name="Tice H."/>
            <person name="Copeland A."/>
            <person name="Cheng J.F."/>
            <person name="Lucas S."/>
            <person name="Chen F."/>
            <person name="Nolan M."/>
            <person name="Bruce D."/>
            <person name="Goodwin L."/>
            <person name="Pitluck S."/>
            <person name="Ivanova N."/>
            <person name="Mavromatis K."/>
            <person name="Ovchinnikova G."/>
            <person name="Pati A."/>
            <person name="Chen A."/>
            <person name="Palaniappan K."/>
            <person name="Hauser L."/>
            <person name="Chang Y.J."/>
            <person name="Jefferies C.C."/>
            <person name="Saunders E."/>
            <person name="Brettin T."/>
            <person name="Detter J.C."/>
            <person name="Han C."/>
            <person name="Chain P."/>
            <person name="Bristow J."/>
            <person name="Eisen J.A."/>
            <person name="Markowitz V."/>
            <person name="Hugenholtz P."/>
            <person name="Kyrpides N.C."/>
            <person name="Klenk H.P."/>
            <person name="Lapidus A."/>
        </authorList>
    </citation>
    <scope>NUCLEOTIDE SEQUENCE [LARGE SCALE GENOMIC DNA]</scope>
    <source>
        <strain>ATCC BAA-8 / DSM 12333 / CCUG 43141 / JCM 11478 / NBRC 16432 / NCIMB 13614 / HKI 0122</strain>
    </source>
</reference>
<sequence length="99" mass="10630">MTLVNYLVLSGLLFTIGAATVLVRRNAIIMFMGVELMLNASNLAFVAFGRLHGTLTGEVVAFFVMVVAAAEVVVGLAIIVSIYRARRSVSVDELSLLKN</sequence>
<accession>C5C0R7</accession>
<gene>
    <name evidence="1" type="primary">nuoK</name>
    <name type="ordered locus">Bcav_3219</name>
</gene>
<organism>
    <name type="scientific">Beutenbergia cavernae (strain ATCC BAA-8 / DSM 12333 / CCUG 43141 / JCM 11478 / NBRC 16432 / NCIMB 13614 / HKI 0122)</name>
    <dbReference type="NCBI Taxonomy" id="471853"/>
    <lineage>
        <taxon>Bacteria</taxon>
        <taxon>Bacillati</taxon>
        <taxon>Actinomycetota</taxon>
        <taxon>Actinomycetes</taxon>
        <taxon>Micrococcales</taxon>
        <taxon>Beutenbergiaceae</taxon>
        <taxon>Beutenbergia</taxon>
    </lineage>
</organism>
<proteinExistence type="inferred from homology"/>
<feature type="chain" id="PRO_0000389959" description="NADH-quinone oxidoreductase subunit K">
    <location>
        <begin position="1"/>
        <end position="99"/>
    </location>
</feature>
<feature type="transmembrane region" description="Helical" evidence="1">
    <location>
        <begin position="3"/>
        <end position="23"/>
    </location>
</feature>
<feature type="transmembrane region" description="Helical" evidence="1">
    <location>
        <begin position="28"/>
        <end position="48"/>
    </location>
</feature>
<feature type="transmembrane region" description="Helical" evidence="1">
    <location>
        <begin position="59"/>
        <end position="79"/>
    </location>
</feature>
<evidence type="ECO:0000255" key="1">
    <source>
        <dbReference type="HAMAP-Rule" id="MF_01456"/>
    </source>
</evidence>